<comment type="function">
    <text evidence="5 6 7">Truncated and inactivated form of SRK, the female specificity determinant of self-incompatibility when active. Most A.thaliana cultivars contain such an inactive form and thus, are self-fertiles.</text>
</comment>
<comment type="subcellular location">
    <subcellularLocation>
        <location evidence="1">Cell membrane</location>
        <topology evidence="1">Single-pass type I membrane protein</topology>
    </subcellularLocation>
</comment>
<comment type="domain">
    <text>The protein kinase domain is predicted to be catalytically inactive.</text>
</comment>
<comment type="similarity">
    <text evidence="8">Belongs to the protein kinase superfamily. Ser/Thr protein kinase family.</text>
</comment>
<comment type="caution">
    <text evidence="8">Could be the product of a pseudogene. In strain cv. Columbia, a frameshift mutation introduces a premature stop codon leading to a truncated SRK protein. A complete sequence for SRK can be found in strains cv. Pog-0 and cv. Wei-1 (AC P0DH86).</text>
</comment>
<comment type="sequence caution" evidence="8">
    <conflict type="erroneous gene model prediction">
        <sequence resource="EMBL-CDS" id="CAA20202"/>
    </conflict>
</comment>
<comment type="sequence caution" evidence="8">
    <conflict type="erroneous gene model prediction">
        <sequence resource="EMBL-CDS" id="CAB79136"/>
    </conflict>
</comment>
<comment type="online information" name="Protein Spotlight">
    <link uri="https://www.proteinspotlight.org/back_issues/128"/>
    <text>Do it yourself - Issue 128 of May 2011</text>
</comment>
<protein>
    <recommendedName>
        <fullName>Putative inactive G-type lectin S-receptor-like serine/threonine-protein kinase SRK</fullName>
    </recommendedName>
    <alternativeName>
        <fullName>Pseudogene of S-locus receptor kinase A</fullName>
    </alternativeName>
</protein>
<dbReference type="EMBL" id="AL031187">
    <property type="protein sequence ID" value="CAA20202.1"/>
    <property type="status" value="ALT_SEQ"/>
    <property type="molecule type" value="Genomic_DNA"/>
</dbReference>
<dbReference type="EMBL" id="AL161554">
    <property type="protein sequence ID" value="CAB79136.1"/>
    <property type="status" value="ALT_SEQ"/>
    <property type="molecule type" value="Genomic_DNA"/>
</dbReference>
<dbReference type="EMBL" id="CP002687">
    <property type="status" value="NOT_ANNOTATED_CDS"/>
    <property type="molecule type" value="Genomic_DNA"/>
</dbReference>
<dbReference type="PIR" id="T05179">
    <property type="entry name" value="T05179"/>
</dbReference>
<dbReference type="SMR" id="P0DH87"/>
<dbReference type="STRING" id="3702.P0DH87"/>
<dbReference type="GlyCosmos" id="P0DH87">
    <property type="glycosylation" value="5 sites, No reported glycans"/>
</dbReference>
<dbReference type="GlyGen" id="P0DH87">
    <property type="glycosylation" value="5 sites"/>
</dbReference>
<dbReference type="PeptideAtlas" id="P0DH87"/>
<dbReference type="Araport" id="AT4G21370"/>
<dbReference type="TAIR" id="AT4G21370"/>
<dbReference type="InParanoid" id="P0DH87"/>
<dbReference type="Proteomes" id="UP000006548">
    <property type="component" value="Chromosome 4"/>
</dbReference>
<dbReference type="ExpressionAtlas" id="P0DH87">
    <property type="expression patterns" value="baseline and differential"/>
</dbReference>
<dbReference type="GO" id="GO:0005886">
    <property type="term" value="C:plasma membrane"/>
    <property type="evidence" value="ECO:0007669"/>
    <property type="project" value="UniProtKB-SubCell"/>
</dbReference>
<dbReference type="GO" id="GO:0005524">
    <property type="term" value="F:ATP binding"/>
    <property type="evidence" value="ECO:0007669"/>
    <property type="project" value="UniProtKB-KW"/>
</dbReference>
<dbReference type="GO" id="GO:0005516">
    <property type="term" value="F:calmodulin binding"/>
    <property type="evidence" value="ECO:0000250"/>
    <property type="project" value="UniProtKB"/>
</dbReference>
<dbReference type="GO" id="GO:0030246">
    <property type="term" value="F:carbohydrate binding"/>
    <property type="evidence" value="ECO:0007669"/>
    <property type="project" value="UniProtKB-KW"/>
</dbReference>
<dbReference type="GO" id="GO:0004674">
    <property type="term" value="F:protein serine/threonine kinase activity"/>
    <property type="evidence" value="ECO:0000250"/>
    <property type="project" value="UniProtKB"/>
</dbReference>
<dbReference type="GO" id="GO:0042742">
    <property type="term" value="P:defense response to bacterium"/>
    <property type="evidence" value="ECO:0000250"/>
    <property type="project" value="UniProtKB"/>
</dbReference>
<dbReference type="GO" id="GO:0046777">
    <property type="term" value="P:protein autophosphorylation"/>
    <property type="evidence" value="ECO:0000250"/>
    <property type="project" value="UniProtKB"/>
</dbReference>
<dbReference type="GO" id="GO:0048544">
    <property type="term" value="P:recognition of pollen"/>
    <property type="evidence" value="ECO:0007669"/>
    <property type="project" value="InterPro"/>
</dbReference>
<dbReference type="CDD" id="cd00028">
    <property type="entry name" value="B_lectin"/>
    <property type="match status" value="1"/>
</dbReference>
<dbReference type="CDD" id="cd01098">
    <property type="entry name" value="PAN_AP_plant"/>
    <property type="match status" value="1"/>
</dbReference>
<dbReference type="FunFam" id="2.90.10.10:FF:000047">
    <property type="entry name" value="Putative inactive G-type lectin S-receptor-like serine/threonine-protein kinase SRK"/>
    <property type="match status" value="1"/>
</dbReference>
<dbReference type="Gene3D" id="2.90.10.10">
    <property type="entry name" value="Bulb-type lectin domain"/>
    <property type="match status" value="1"/>
</dbReference>
<dbReference type="Gene3D" id="3.30.200.20">
    <property type="entry name" value="Phosphorylase Kinase, domain 1"/>
    <property type="match status" value="1"/>
</dbReference>
<dbReference type="InterPro" id="IPR001480">
    <property type="entry name" value="Bulb-type_lectin_dom"/>
</dbReference>
<dbReference type="InterPro" id="IPR036426">
    <property type="entry name" value="Bulb-type_lectin_dom_sf"/>
</dbReference>
<dbReference type="InterPro" id="IPR011009">
    <property type="entry name" value="Kinase-like_dom_sf"/>
</dbReference>
<dbReference type="InterPro" id="IPR003609">
    <property type="entry name" value="Pan_app"/>
</dbReference>
<dbReference type="InterPro" id="IPR022126">
    <property type="entry name" value="S-locus_recpt_kinase"/>
</dbReference>
<dbReference type="InterPro" id="IPR000858">
    <property type="entry name" value="S_locus_glycoprot_dom"/>
</dbReference>
<dbReference type="PANTHER" id="PTHR32444">
    <property type="entry name" value="BULB-TYPE LECTIN DOMAIN-CONTAINING PROTEIN"/>
    <property type="match status" value="1"/>
</dbReference>
<dbReference type="PANTHER" id="PTHR32444:SF251">
    <property type="entry name" value="INACTIVE G-TYPE LECTIN S-RECEPTOR-LIKE SERINE_THREONINE-PROTEIN KINASE SRK-RELATED"/>
    <property type="match status" value="1"/>
</dbReference>
<dbReference type="Pfam" id="PF01453">
    <property type="entry name" value="B_lectin"/>
    <property type="match status" value="1"/>
</dbReference>
<dbReference type="Pfam" id="PF12398">
    <property type="entry name" value="DUF3660"/>
    <property type="match status" value="1"/>
</dbReference>
<dbReference type="Pfam" id="PF08276">
    <property type="entry name" value="PAN_2"/>
    <property type="match status" value="1"/>
</dbReference>
<dbReference type="Pfam" id="PF00954">
    <property type="entry name" value="S_locus_glycop"/>
    <property type="match status" value="1"/>
</dbReference>
<dbReference type="SMART" id="SM00108">
    <property type="entry name" value="B_lectin"/>
    <property type="match status" value="1"/>
</dbReference>
<dbReference type="SMART" id="SM00473">
    <property type="entry name" value="PAN_AP"/>
    <property type="match status" value="1"/>
</dbReference>
<dbReference type="SUPFAM" id="SSF51110">
    <property type="entry name" value="alpha-D-mannose-specific plant lectins"/>
    <property type="match status" value="1"/>
</dbReference>
<dbReference type="SUPFAM" id="SSF56112">
    <property type="entry name" value="Protein kinase-like (PK-like)"/>
    <property type="match status" value="1"/>
</dbReference>
<dbReference type="PROSITE" id="PS50927">
    <property type="entry name" value="BULB_LECTIN"/>
    <property type="match status" value="1"/>
</dbReference>
<dbReference type="PROSITE" id="PS50948">
    <property type="entry name" value="PAN"/>
    <property type="match status" value="1"/>
</dbReference>
<name>PSRK_ARATH</name>
<feature type="signal peptide" evidence="2">
    <location>
        <begin position="1"/>
        <end position="31"/>
    </location>
</feature>
<feature type="chain" id="PRO_0000413168" description="Putative inactive G-type lectin S-receptor-like serine/threonine-protein kinase SRK">
    <location>
        <begin position="32"/>
        <end position="546"/>
    </location>
</feature>
<feature type="topological domain" description="Extracellular" evidence="2">
    <location>
        <begin position="32"/>
        <end position="441"/>
    </location>
</feature>
<feature type="transmembrane region" description="Helical" evidence="2">
    <location>
        <begin position="442"/>
        <end position="462"/>
    </location>
</feature>
<feature type="topological domain" description="Cytoplasmic" evidence="2">
    <location>
        <begin position="463"/>
        <end position="546"/>
    </location>
</feature>
<feature type="domain" description="Bulb-type lectin" evidence="3">
    <location>
        <begin position="34"/>
        <end position="154"/>
    </location>
</feature>
<feature type="domain" description="EGF-like; atypical">
    <location>
        <begin position="293"/>
        <end position="329"/>
    </location>
</feature>
<feature type="domain" description="PAN" evidence="4">
    <location>
        <begin position="348"/>
        <end position="428"/>
    </location>
</feature>
<feature type="domain" description="Protein kinase">
    <location>
        <begin position="524"/>
        <end position="546"/>
    </location>
</feature>
<feature type="binding site" evidence="1">
    <location>
        <begin position="530"/>
        <end position="538"/>
    </location>
    <ligand>
        <name>ATP</name>
        <dbReference type="ChEBI" id="CHEBI:30616"/>
    </ligand>
</feature>
<feature type="glycosylation site" description="N-linked (GlcNAc...) asparagine" evidence="2">
    <location>
        <position position="46"/>
    </location>
</feature>
<feature type="glycosylation site" description="N-linked (GlcNAc...) asparagine" evidence="2">
    <location>
        <position position="120"/>
    </location>
</feature>
<feature type="glycosylation site" description="N-linked (GlcNAc...) asparagine" evidence="2">
    <location>
        <position position="147"/>
    </location>
</feature>
<feature type="glycosylation site" description="N-linked (GlcNAc...) asparagine" evidence="2">
    <location>
        <position position="243"/>
    </location>
</feature>
<feature type="glycosylation site" description="N-linked (GlcNAc...) asparagine" evidence="2">
    <location>
        <position position="387"/>
    </location>
</feature>
<feature type="disulfide bond" evidence="1">
    <location>
        <begin position="297"/>
        <end position="309"/>
    </location>
</feature>
<feature type="disulfide bond" evidence="1">
    <location>
        <begin position="303"/>
        <end position="317"/>
    </location>
</feature>
<feature type="disulfide bond" evidence="1">
    <location>
        <begin position="378"/>
        <end position="403"/>
    </location>
</feature>
<feature type="disulfide bond" evidence="1">
    <location>
        <begin position="382"/>
        <end position="388"/>
    </location>
</feature>
<accession>P0DH87</accession>
<accession>B0F2A9</accession>
<accession>B0F2B0</accession>
<accession>D6NTN9</accession>
<accession>D6NTP0</accession>
<accession>D6NTP1</accession>
<accession>D6NTP2</accession>
<accession>D6NTP6</accession>
<accession>D6NTP7</accession>
<accession>D6NTP8</accession>
<accession>O81904</accession>
<proteinExistence type="uncertain"/>
<keyword id="KW-0067">ATP-binding</keyword>
<keyword id="KW-1003">Cell membrane</keyword>
<keyword id="KW-1015">Disulfide bond</keyword>
<keyword id="KW-0325">Glycoprotein</keyword>
<keyword id="KW-0430">Lectin</keyword>
<keyword id="KW-0472">Membrane</keyword>
<keyword id="KW-0547">Nucleotide-binding</keyword>
<keyword id="KW-0675">Receptor</keyword>
<keyword id="KW-1185">Reference proteome</keyword>
<keyword id="KW-0732">Signal</keyword>
<keyword id="KW-0812">Transmembrane</keyword>
<keyword id="KW-1133">Transmembrane helix</keyword>
<reference key="1">
    <citation type="journal article" date="1999" name="Nature">
        <title>Sequence and analysis of chromosome 4 of the plant Arabidopsis thaliana.</title>
        <authorList>
            <person name="Mayer K.F.X."/>
            <person name="Schueller C."/>
            <person name="Wambutt R."/>
            <person name="Murphy G."/>
            <person name="Volckaert G."/>
            <person name="Pohl T."/>
            <person name="Duesterhoeft A."/>
            <person name="Stiekema W."/>
            <person name="Entian K.-D."/>
            <person name="Terryn N."/>
            <person name="Harris B."/>
            <person name="Ansorge W."/>
            <person name="Brandt P."/>
            <person name="Grivell L.A."/>
            <person name="Rieger M."/>
            <person name="Weichselgartner M."/>
            <person name="de Simone V."/>
            <person name="Obermaier B."/>
            <person name="Mache R."/>
            <person name="Mueller M."/>
            <person name="Kreis M."/>
            <person name="Delseny M."/>
            <person name="Puigdomenech P."/>
            <person name="Watson M."/>
            <person name="Schmidtheini T."/>
            <person name="Reichert B."/>
            <person name="Portetelle D."/>
            <person name="Perez-Alonso M."/>
            <person name="Boutry M."/>
            <person name="Bancroft I."/>
            <person name="Vos P."/>
            <person name="Hoheisel J."/>
            <person name="Zimmermann W."/>
            <person name="Wedler H."/>
            <person name="Ridley P."/>
            <person name="Langham S.-A."/>
            <person name="McCullagh B."/>
            <person name="Bilham L."/>
            <person name="Robben J."/>
            <person name="van der Schueren J."/>
            <person name="Grymonprez B."/>
            <person name="Chuang Y.-J."/>
            <person name="Vandenbussche F."/>
            <person name="Braeken M."/>
            <person name="Weltjens I."/>
            <person name="Voet M."/>
            <person name="Bastiaens I."/>
            <person name="Aert R."/>
            <person name="Defoor E."/>
            <person name="Weitzenegger T."/>
            <person name="Bothe G."/>
            <person name="Ramsperger U."/>
            <person name="Hilbert H."/>
            <person name="Braun M."/>
            <person name="Holzer E."/>
            <person name="Brandt A."/>
            <person name="Peters S."/>
            <person name="van Staveren M."/>
            <person name="Dirkse W."/>
            <person name="Mooijman P."/>
            <person name="Klein Lankhorst R."/>
            <person name="Rose M."/>
            <person name="Hauf J."/>
            <person name="Koetter P."/>
            <person name="Berneiser S."/>
            <person name="Hempel S."/>
            <person name="Feldpausch M."/>
            <person name="Lamberth S."/>
            <person name="Van den Daele H."/>
            <person name="De Keyser A."/>
            <person name="Buysshaert C."/>
            <person name="Gielen J."/>
            <person name="Villarroel R."/>
            <person name="De Clercq R."/>
            <person name="van Montagu M."/>
            <person name="Rogers J."/>
            <person name="Cronin A."/>
            <person name="Quail M.A."/>
            <person name="Bray-Allen S."/>
            <person name="Clark L."/>
            <person name="Doggett J."/>
            <person name="Hall S."/>
            <person name="Kay M."/>
            <person name="Lennard N."/>
            <person name="McLay K."/>
            <person name="Mayes R."/>
            <person name="Pettett A."/>
            <person name="Rajandream M.A."/>
            <person name="Lyne M."/>
            <person name="Benes V."/>
            <person name="Rechmann S."/>
            <person name="Borkova D."/>
            <person name="Bloecker H."/>
            <person name="Scharfe M."/>
            <person name="Grimm M."/>
            <person name="Loehnert T.-H."/>
            <person name="Dose S."/>
            <person name="de Haan M."/>
            <person name="Maarse A.C."/>
            <person name="Schaefer M."/>
            <person name="Mueller-Auer S."/>
            <person name="Gabel C."/>
            <person name="Fuchs M."/>
            <person name="Fartmann B."/>
            <person name="Granderath K."/>
            <person name="Dauner D."/>
            <person name="Herzl A."/>
            <person name="Neumann S."/>
            <person name="Argiriou A."/>
            <person name="Vitale D."/>
            <person name="Liguori R."/>
            <person name="Piravandi E."/>
            <person name="Massenet O."/>
            <person name="Quigley F."/>
            <person name="Clabauld G."/>
            <person name="Muendlein A."/>
            <person name="Felber R."/>
            <person name="Schnabl S."/>
            <person name="Hiller R."/>
            <person name="Schmidt W."/>
            <person name="Lecharny A."/>
            <person name="Aubourg S."/>
            <person name="Chefdor F."/>
            <person name="Cooke R."/>
            <person name="Berger C."/>
            <person name="Monfort A."/>
            <person name="Casacuberta E."/>
            <person name="Gibbons T."/>
            <person name="Weber N."/>
            <person name="Vandenbol M."/>
            <person name="Bargues M."/>
            <person name="Terol J."/>
            <person name="Torres A."/>
            <person name="Perez-Perez A."/>
            <person name="Purnelle B."/>
            <person name="Bent E."/>
            <person name="Johnson S."/>
            <person name="Tacon D."/>
            <person name="Jesse T."/>
            <person name="Heijnen L."/>
            <person name="Schwarz S."/>
            <person name="Scholler P."/>
            <person name="Heber S."/>
            <person name="Francs P."/>
            <person name="Bielke C."/>
            <person name="Frishman D."/>
            <person name="Haase D."/>
            <person name="Lemcke K."/>
            <person name="Mewes H.-W."/>
            <person name="Stocker S."/>
            <person name="Zaccaria P."/>
            <person name="Bevan M."/>
            <person name="Wilson R.K."/>
            <person name="de la Bastide M."/>
            <person name="Habermann K."/>
            <person name="Parnell L."/>
            <person name="Dedhia N."/>
            <person name="Gnoj L."/>
            <person name="Schutz K."/>
            <person name="Huang E."/>
            <person name="Spiegel L."/>
            <person name="Sekhon M."/>
            <person name="Murray J."/>
            <person name="Sheet P."/>
            <person name="Cordes M."/>
            <person name="Abu-Threideh J."/>
            <person name="Stoneking T."/>
            <person name="Kalicki J."/>
            <person name="Graves T."/>
            <person name="Harmon G."/>
            <person name="Edwards J."/>
            <person name="Latreille P."/>
            <person name="Courtney L."/>
            <person name="Cloud J."/>
            <person name="Abbott A."/>
            <person name="Scott K."/>
            <person name="Johnson D."/>
            <person name="Minx P."/>
            <person name="Bentley D."/>
            <person name="Fulton B."/>
            <person name="Miller N."/>
            <person name="Greco T."/>
            <person name="Kemp K."/>
            <person name="Kramer J."/>
            <person name="Fulton L."/>
            <person name="Mardis E."/>
            <person name="Dante M."/>
            <person name="Pepin K."/>
            <person name="Hillier L.W."/>
            <person name="Nelson J."/>
            <person name="Spieth J."/>
            <person name="Ryan E."/>
            <person name="Andrews S."/>
            <person name="Geisel C."/>
            <person name="Layman D."/>
            <person name="Du H."/>
            <person name="Ali J."/>
            <person name="Berghoff A."/>
            <person name="Jones K."/>
            <person name="Drone K."/>
            <person name="Cotton M."/>
            <person name="Joshu C."/>
            <person name="Antonoiu B."/>
            <person name="Zidanic M."/>
            <person name="Strong C."/>
            <person name="Sun H."/>
            <person name="Lamar B."/>
            <person name="Yordan C."/>
            <person name="Ma P."/>
            <person name="Zhong J."/>
            <person name="Preston R."/>
            <person name="Vil D."/>
            <person name="Shekher M."/>
            <person name="Matero A."/>
            <person name="Shah R."/>
            <person name="Swaby I.K."/>
            <person name="O'Shaughnessy A."/>
            <person name="Rodriguez M."/>
            <person name="Hoffman J."/>
            <person name="Till S."/>
            <person name="Granat S."/>
            <person name="Shohdy N."/>
            <person name="Hasegawa A."/>
            <person name="Hameed A."/>
            <person name="Lodhi M."/>
            <person name="Johnson A."/>
            <person name="Chen E."/>
            <person name="Marra M.A."/>
            <person name="Martienssen R."/>
            <person name="McCombie W.R."/>
        </authorList>
    </citation>
    <scope>NUCLEOTIDE SEQUENCE [LARGE SCALE GENOMIC DNA]</scope>
    <source>
        <strain>cv. Columbia</strain>
    </source>
</reference>
<reference key="2">
    <citation type="journal article" date="2017" name="Plant J.">
        <title>Araport11: a complete reannotation of the Arabidopsis thaliana reference genome.</title>
        <authorList>
            <person name="Cheng C.Y."/>
            <person name="Krishnakumar V."/>
            <person name="Chan A.P."/>
            <person name="Thibaud-Nissen F."/>
            <person name="Schobel S."/>
            <person name="Town C.D."/>
        </authorList>
    </citation>
    <scope>GENOME REANNOTATION</scope>
    <source>
        <strain>cv. Columbia</strain>
    </source>
</reference>
<reference key="3">
    <citation type="journal article" date="2004" name="Proc. Natl. Acad. Sci. U.S.A.">
        <title>Natural variation in expression of self-incompatibility in Arabidopsis thaliana: implications for the evolution of selfing.</title>
        <authorList>
            <person name="Nasrallah M.E."/>
            <person name="Liu P."/>
            <person name="Sherman-Broyles S."/>
            <person name="Boggs N.A."/>
            <person name="Nasrallah J.B."/>
        </authorList>
    </citation>
    <scope>FUNCTION</scope>
</reference>
<reference key="4">
    <citation type="journal article" date="2007" name="Plant Cell">
        <title>S locus genes and the evolution of self-fertility in Arabidopsis thaliana.</title>
        <authorList>
            <person name="Sherman-Broyles S."/>
            <person name="Boggs N."/>
            <person name="Farkas A."/>
            <person name="Liu P."/>
            <person name="Vrebalov J."/>
            <person name="Nasrallah M.E."/>
            <person name="Nasrallah J.B."/>
        </authorList>
    </citation>
    <scope>FUNCTION</scope>
    <scope>REVIEW</scope>
</reference>
<reference key="5">
    <citation type="journal article" date="2007" name="Science">
        <title>The evolution of selfing in Arabidopsis thaliana.</title>
        <authorList>
            <person name="Tang C."/>
            <person name="Toomajian C."/>
            <person name="Sherman-Broyles S."/>
            <person name="Plagnol V."/>
            <person name="Guo Y.-L."/>
            <person name="Hu T.T."/>
            <person name="Clark R.M."/>
            <person name="Nasrallah J.B."/>
            <person name="Weigel D."/>
            <person name="Nordborg M."/>
        </authorList>
    </citation>
    <scope>FUNCTION</scope>
</reference>
<sequence>MRGELPNKHHSYTFFVFLFFFLILFPDLSISVNTLSATESLTISSNKTIVSPGGVFELGFFRILGDSWYLGIWYKKISQRTYVWVANRDTPLSNPIGILKISNANLVILDNSDTHVWSTNLTGAVRSSVVAELLDNGNFVLRGSKINESDEFLWQSFDFPTDTLLPQMKLGRDHKRGLNRFVTSWKSSFDPSSGSFMFKLETLGLPEFFGFTSFLEVYRSGPWDGLRFSGILEMQQWDDIIYNFTENREEVAYTFRVTDHNSYSRLTINTVGRLEGFTWEPTQQEWNMFWFMPKDTCDLYGICGPYAYCDMSTSPTCNCIKGFQPLSPQDWASGDVTGRCRRKTQLTCGEDRFFRLMNMKIPATTAAIVDKRIGLKECEEKCKTHCNCTAYANSDIRNGGSGCIIWIGEFRDIRNYAADGQDLFVRLAAAEFGERRTIRGKIIGLIIGISLMLVLSFIIYCFWKKKQKRARATAAPIGYRDRIQELIITNGVVMSSGRRLLGEEEDLELPLTEFETVVMATENFSDSNILGRGGFGIVYKGRLLDG</sequence>
<evidence type="ECO:0000250" key="1"/>
<evidence type="ECO:0000255" key="2"/>
<evidence type="ECO:0000255" key="3">
    <source>
        <dbReference type="PROSITE-ProRule" id="PRU00038"/>
    </source>
</evidence>
<evidence type="ECO:0000255" key="4">
    <source>
        <dbReference type="PROSITE-ProRule" id="PRU00315"/>
    </source>
</evidence>
<evidence type="ECO:0000269" key="5">
    <source>
    </source>
</evidence>
<evidence type="ECO:0000269" key="6">
    <source>
    </source>
</evidence>
<evidence type="ECO:0000269" key="7">
    <source>
    </source>
</evidence>
<evidence type="ECO:0000305" key="8"/>
<organism>
    <name type="scientific">Arabidopsis thaliana</name>
    <name type="common">Mouse-ear cress</name>
    <dbReference type="NCBI Taxonomy" id="3702"/>
    <lineage>
        <taxon>Eukaryota</taxon>
        <taxon>Viridiplantae</taxon>
        <taxon>Streptophyta</taxon>
        <taxon>Embryophyta</taxon>
        <taxon>Tracheophyta</taxon>
        <taxon>Spermatophyta</taxon>
        <taxon>Magnoliopsida</taxon>
        <taxon>eudicotyledons</taxon>
        <taxon>Gunneridae</taxon>
        <taxon>Pentapetalae</taxon>
        <taxon>rosids</taxon>
        <taxon>malvids</taxon>
        <taxon>Brassicales</taxon>
        <taxon>Brassicaceae</taxon>
        <taxon>Camelineae</taxon>
        <taxon>Arabidopsis</taxon>
    </lineage>
</organism>
<gene>
    <name type="primary">PSEUDOSRKA</name>
    <name type="ordered locus">At4g21370</name>
    <name type="ORF">T6K22.100</name>
</gene>